<gene>
    <name type="primary">Pax3</name>
    <name type="synonym">Pax-3</name>
</gene>
<organism>
    <name type="scientific">Mus musculus</name>
    <name type="common">Mouse</name>
    <dbReference type="NCBI Taxonomy" id="10090"/>
    <lineage>
        <taxon>Eukaryota</taxon>
        <taxon>Metazoa</taxon>
        <taxon>Chordata</taxon>
        <taxon>Craniata</taxon>
        <taxon>Vertebrata</taxon>
        <taxon>Euteleostomi</taxon>
        <taxon>Mammalia</taxon>
        <taxon>Eutheria</taxon>
        <taxon>Euarchontoglires</taxon>
        <taxon>Glires</taxon>
        <taxon>Rodentia</taxon>
        <taxon>Myomorpha</taxon>
        <taxon>Muroidea</taxon>
        <taxon>Muridae</taxon>
        <taxon>Murinae</taxon>
        <taxon>Mus</taxon>
        <taxon>Mus</taxon>
    </lineage>
</organism>
<proteinExistence type="evidence at protein level"/>
<accession>P24610</accession>
<accession>Q3UFQ9</accession>
<accession>Q8BRE7</accession>
<accession>Q9CXI6</accession>
<reference key="1">
    <citation type="journal article" date="1991" name="EMBO J.">
        <title>Pax-3, a novel murine DNA binding protein expressed during early neurogenesis.</title>
        <authorList>
            <person name="Goulding M.D."/>
            <person name="Chalepakis G."/>
            <person name="Deutsch U."/>
            <person name="Erselius J.R."/>
            <person name="Gruss P."/>
        </authorList>
    </citation>
    <scope>NUCLEOTIDE SEQUENCE [MRNA]</scope>
</reference>
<reference key="2">
    <citation type="journal article" date="2005" name="Science">
        <title>The transcriptional landscape of the mammalian genome.</title>
        <authorList>
            <person name="Carninci P."/>
            <person name="Kasukawa T."/>
            <person name="Katayama S."/>
            <person name="Gough J."/>
            <person name="Frith M.C."/>
            <person name="Maeda N."/>
            <person name="Oyama R."/>
            <person name="Ravasi T."/>
            <person name="Lenhard B."/>
            <person name="Wells C."/>
            <person name="Kodzius R."/>
            <person name="Shimokawa K."/>
            <person name="Bajic V.B."/>
            <person name="Brenner S.E."/>
            <person name="Batalov S."/>
            <person name="Forrest A.R."/>
            <person name="Zavolan M."/>
            <person name="Davis M.J."/>
            <person name="Wilming L.G."/>
            <person name="Aidinis V."/>
            <person name="Allen J.E."/>
            <person name="Ambesi-Impiombato A."/>
            <person name="Apweiler R."/>
            <person name="Aturaliya R.N."/>
            <person name="Bailey T.L."/>
            <person name="Bansal M."/>
            <person name="Baxter L."/>
            <person name="Beisel K.W."/>
            <person name="Bersano T."/>
            <person name="Bono H."/>
            <person name="Chalk A.M."/>
            <person name="Chiu K.P."/>
            <person name="Choudhary V."/>
            <person name="Christoffels A."/>
            <person name="Clutterbuck D.R."/>
            <person name="Crowe M.L."/>
            <person name="Dalla E."/>
            <person name="Dalrymple B.P."/>
            <person name="de Bono B."/>
            <person name="Della Gatta G."/>
            <person name="di Bernardo D."/>
            <person name="Down T."/>
            <person name="Engstrom P."/>
            <person name="Fagiolini M."/>
            <person name="Faulkner G."/>
            <person name="Fletcher C.F."/>
            <person name="Fukushima T."/>
            <person name="Furuno M."/>
            <person name="Futaki S."/>
            <person name="Gariboldi M."/>
            <person name="Georgii-Hemming P."/>
            <person name="Gingeras T.R."/>
            <person name="Gojobori T."/>
            <person name="Green R.E."/>
            <person name="Gustincich S."/>
            <person name="Harbers M."/>
            <person name="Hayashi Y."/>
            <person name="Hensch T.K."/>
            <person name="Hirokawa N."/>
            <person name="Hill D."/>
            <person name="Huminiecki L."/>
            <person name="Iacono M."/>
            <person name="Ikeo K."/>
            <person name="Iwama A."/>
            <person name="Ishikawa T."/>
            <person name="Jakt M."/>
            <person name="Kanapin A."/>
            <person name="Katoh M."/>
            <person name="Kawasawa Y."/>
            <person name="Kelso J."/>
            <person name="Kitamura H."/>
            <person name="Kitano H."/>
            <person name="Kollias G."/>
            <person name="Krishnan S.P."/>
            <person name="Kruger A."/>
            <person name="Kummerfeld S.K."/>
            <person name="Kurochkin I.V."/>
            <person name="Lareau L.F."/>
            <person name="Lazarevic D."/>
            <person name="Lipovich L."/>
            <person name="Liu J."/>
            <person name="Liuni S."/>
            <person name="McWilliam S."/>
            <person name="Madan Babu M."/>
            <person name="Madera M."/>
            <person name="Marchionni L."/>
            <person name="Matsuda H."/>
            <person name="Matsuzawa S."/>
            <person name="Miki H."/>
            <person name="Mignone F."/>
            <person name="Miyake S."/>
            <person name="Morris K."/>
            <person name="Mottagui-Tabar S."/>
            <person name="Mulder N."/>
            <person name="Nakano N."/>
            <person name="Nakauchi H."/>
            <person name="Ng P."/>
            <person name="Nilsson R."/>
            <person name="Nishiguchi S."/>
            <person name="Nishikawa S."/>
            <person name="Nori F."/>
            <person name="Ohara O."/>
            <person name="Okazaki Y."/>
            <person name="Orlando V."/>
            <person name="Pang K.C."/>
            <person name="Pavan W.J."/>
            <person name="Pavesi G."/>
            <person name="Pesole G."/>
            <person name="Petrovsky N."/>
            <person name="Piazza S."/>
            <person name="Reed J."/>
            <person name="Reid J.F."/>
            <person name="Ring B.Z."/>
            <person name="Ringwald M."/>
            <person name="Rost B."/>
            <person name="Ruan Y."/>
            <person name="Salzberg S.L."/>
            <person name="Sandelin A."/>
            <person name="Schneider C."/>
            <person name="Schoenbach C."/>
            <person name="Sekiguchi K."/>
            <person name="Semple C.A."/>
            <person name="Seno S."/>
            <person name="Sessa L."/>
            <person name="Sheng Y."/>
            <person name="Shibata Y."/>
            <person name="Shimada H."/>
            <person name="Shimada K."/>
            <person name="Silva D."/>
            <person name="Sinclair B."/>
            <person name="Sperling S."/>
            <person name="Stupka E."/>
            <person name="Sugiura K."/>
            <person name="Sultana R."/>
            <person name="Takenaka Y."/>
            <person name="Taki K."/>
            <person name="Tammoja K."/>
            <person name="Tan S.L."/>
            <person name="Tang S."/>
            <person name="Taylor M.S."/>
            <person name="Tegner J."/>
            <person name="Teichmann S.A."/>
            <person name="Ueda H.R."/>
            <person name="van Nimwegen E."/>
            <person name="Verardo R."/>
            <person name="Wei C.L."/>
            <person name="Yagi K."/>
            <person name="Yamanishi H."/>
            <person name="Zabarovsky E."/>
            <person name="Zhu S."/>
            <person name="Zimmer A."/>
            <person name="Hide W."/>
            <person name="Bult C."/>
            <person name="Grimmond S.M."/>
            <person name="Teasdale R.D."/>
            <person name="Liu E.T."/>
            <person name="Brusic V."/>
            <person name="Quackenbush J."/>
            <person name="Wahlestedt C."/>
            <person name="Mattick J.S."/>
            <person name="Hume D.A."/>
            <person name="Kai C."/>
            <person name="Sasaki D."/>
            <person name="Tomaru Y."/>
            <person name="Fukuda S."/>
            <person name="Kanamori-Katayama M."/>
            <person name="Suzuki M."/>
            <person name="Aoki J."/>
            <person name="Arakawa T."/>
            <person name="Iida J."/>
            <person name="Imamura K."/>
            <person name="Itoh M."/>
            <person name="Kato T."/>
            <person name="Kawaji H."/>
            <person name="Kawagashira N."/>
            <person name="Kawashima T."/>
            <person name="Kojima M."/>
            <person name="Kondo S."/>
            <person name="Konno H."/>
            <person name="Nakano K."/>
            <person name="Ninomiya N."/>
            <person name="Nishio T."/>
            <person name="Okada M."/>
            <person name="Plessy C."/>
            <person name="Shibata K."/>
            <person name="Shiraki T."/>
            <person name="Suzuki S."/>
            <person name="Tagami M."/>
            <person name="Waki K."/>
            <person name="Watahiki A."/>
            <person name="Okamura-Oho Y."/>
            <person name="Suzuki H."/>
            <person name="Kawai J."/>
            <person name="Hayashizaki Y."/>
        </authorList>
    </citation>
    <scope>NUCLEOTIDE SEQUENCE [LARGE SCALE MRNA]</scope>
    <source>
        <strain>C57BL/6J</strain>
        <tissue>Head</tissue>
    </source>
</reference>
<reference key="3">
    <citation type="journal article" date="1991" name="Cell">
        <title>Splotch (Sp2H), a mutation affecting development of the mouse neural tube, shows a deletion within the paired homeodomain of Pax-3.</title>
        <authorList>
            <person name="Epstein D.J."/>
            <person name="Vekemans M."/>
            <person name="Gros P."/>
        </authorList>
    </citation>
    <scope>NUCLEOTIDE SEQUENCE [MRNA] OF 219-260</scope>
    <scope>DISEASE</scope>
    <scope>FUNCTION</scope>
</reference>
<reference key="4">
    <citation type="journal article" date="2008" name="J. Biol. Chem.">
        <title>T-box protein Tbx18 interacts with the paired box protein Pax3 in the development of the paraxial mesoderm.</title>
        <authorList>
            <person name="Farin H.F."/>
            <person name="Mansouri A."/>
            <person name="Petry M."/>
            <person name="Kispert A."/>
        </authorList>
    </citation>
    <scope>INTERACTION WITH TBX18</scope>
</reference>
<reference key="5">
    <citation type="journal article" date="2012" name="Cell Stem Cell">
        <title>Pax3/7BP is a Pax7- and Pax3-binding protein that regulates the proliferation of muscle precursor cells by an epigenetic mechanism.</title>
        <authorList>
            <person name="Diao Y."/>
            <person name="Guo X."/>
            <person name="Li Y."/>
            <person name="Sun K."/>
            <person name="Lu L."/>
            <person name="Jiang L."/>
            <person name="Fu X."/>
            <person name="Zhu H."/>
            <person name="Sun H."/>
            <person name="Wang H."/>
            <person name="Wu Z."/>
        </authorList>
    </citation>
    <scope>FUNCTION</scope>
    <scope>INTERACTION WITH PAXBP1</scope>
</reference>
<reference key="6">
    <citation type="journal article" date="1993" name="Genomics">
        <title>The splotch-delayed (Spd) mouse mutant carries a point mutation within the paired box of the Pax-3 gene.</title>
        <authorList>
            <person name="Vogan K.J."/>
            <person name="Epstein D.J."/>
            <person name="Trasler D.G."/>
            <person name="Gros P."/>
        </authorList>
    </citation>
    <scope>VARIANT SPD ARG-42</scope>
</reference>
<sequence>MTTLAGAVPRMMRPGPGQNYPRSGFPLEVSTPLGQGRVNQLGGVFINGRPLPNHIRHKIVEMAHHGIRPCVISRQLRVSHGCVSKILCRYQETGSIRPGAIGGSKPKQVTTPDVEKKIEEYKRENPGMFSWEIRDKLLKDAVCDRNTVPSVSSISRILRSKFGKGEEEEADLERKEAEESEKKAKHSIDGILSERASAPQSDEGSDIDSEPDLPLKRKQRRSRTTFTAEQLEELERAFERTHYPDIYTREELAQRAKLTEARVQVWFSNRRARWRKQAGANQLMAFNHLIPGGFPPTAMPTLPTYQLSETSYQPTSIPQAVSDPSSTVHRPQPLPPSTVHQSTIPSNADSSSAYCLPSTRHGFSSYTDSFVPPSGPSNPMNPTIGNGLSPQVMGLLTNHGGVPHQPQTDYALSPLTGGLEPTTTVSASCSQRLEHMKNVDSLPTSQPYCPPTYSTAGYSMDPVTGYQYGQYGQSKPWTF</sequence>
<feature type="chain" id="PRO_0000050179" description="Paired box protein Pax-3">
    <location>
        <begin position="1"/>
        <end position="479"/>
    </location>
</feature>
<feature type="DNA-binding region" description="Paired" evidence="3">
    <location>
        <begin position="34"/>
        <end position="161"/>
    </location>
</feature>
<feature type="DNA-binding region" description="Homeobox" evidence="2">
    <location>
        <begin position="219"/>
        <end position="278"/>
    </location>
</feature>
<feature type="region of interest" description="Disordered" evidence="4">
    <location>
        <begin position="1"/>
        <end position="21"/>
    </location>
</feature>
<feature type="region of interest" description="PAI subdomain" evidence="3">
    <location>
        <begin position="37"/>
        <end position="93"/>
    </location>
</feature>
<feature type="region of interest" description="RED subdomain" evidence="3">
    <location>
        <begin position="113"/>
        <end position="161"/>
    </location>
</feature>
<feature type="region of interest" description="Disordered" evidence="4">
    <location>
        <begin position="165"/>
        <end position="228"/>
    </location>
</feature>
<feature type="region of interest" description="Disordered" evidence="4">
    <location>
        <begin position="309"/>
        <end position="351"/>
    </location>
</feature>
<feature type="compositionally biased region" description="Basic and acidic residues" evidence="4">
    <location>
        <begin position="172"/>
        <end position="188"/>
    </location>
</feature>
<feature type="compositionally biased region" description="Polar residues" evidence="4">
    <location>
        <begin position="309"/>
        <end position="329"/>
    </location>
</feature>
<feature type="compositionally biased region" description="Polar residues" evidence="4">
    <location>
        <begin position="338"/>
        <end position="351"/>
    </location>
</feature>
<feature type="modified residue" description="Phosphoserine" evidence="1">
    <location>
        <position position="201"/>
    </location>
</feature>
<feature type="modified residue" description="Phosphoserine" evidence="1">
    <location>
        <position position="205"/>
    </location>
</feature>
<feature type="modified residue" description="Phosphoserine" evidence="1">
    <location>
        <position position="209"/>
    </location>
</feature>
<feature type="sequence variant" description="In Spd." evidence="8">
    <original>G</original>
    <variation>R</variation>
    <location>
        <position position="42"/>
    </location>
</feature>
<feature type="sequence conflict" description="In Ref. 2; BAC32185." evidence="9" ref="2">
    <original>D</original>
    <variation>G</variation>
    <location>
        <position position="140"/>
    </location>
</feature>
<feature type="sequence conflict" description="In Ref. 1; CAA42008." evidence="9" ref="1">
    <original>T</original>
    <variation>H</variation>
    <location>
        <position position="310"/>
    </location>
</feature>
<comment type="function">
    <text evidence="1 5 7">Transcription factor that may regulate cell proliferation, migration and apoptosis. Involved in neural development and myogenesis. Transcriptional activator of MITF, acting synergistically with SOX10 (By similarity).</text>
</comment>
<comment type="subunit">
    <text evidence="1 6 7">Can bind to DNA as homodimer or a heterodimer with PAX7. Interacts with DAXX. Interacts with PAXBP1; the interaction links PAX3 to a WDR5-containing histone methyltransferase complex. Interacts with TBX18. Interacts with SOX10 (By similarity).</text>
</comment>
<comment type="interaction">
    <interactant intactId="EBI-1208116">
        <id>P24610</id>
    </interactant>
    <interactant intactId="EBI-971782">
        <id>P13405</id>
        <label>Rb1</label>
    </interactant>
    <organismsDiffer>false</organismsDiffer>
    <experiments>3</experiments>
</comment>
<comment type="interaction">
    <interactant intactId="EBI-1208116">
        <id>P24610</id>
    </interactant>
    <interactant intactId="EBI-359318">
        <id>P55036</id>
        <label>PSMD4</label>
    </interactant>
    <organismsDiffer>true</organismsDiffer>
    <experiments>3</experiments>
</comment>
<comment type="interaction">
    <interactant intactId="EBI-1208116">
        <id>P24610</id>
    </interactant>
    <interactant intactId="EBI-954531">
        <id>P54727</id>
        <label>RAD23B</label>
    </interactant>
    <organismsDiffer>true</organismsDiffer>
    <experiments>4</experiments>
</comment>
<comment type="interaction">
    <interactant intactId="EBI-1208116">
        <id>P24610</id>
    </interactant>
    <interactant intactId="EBI-971402">
        <id>P28749</id>
        <label>RBL1</label>
    </interactant>
    <organismsDiffer>true</organismsDiffer>
    <experiments>3</experiments>
</comment>
<comment type="interaction">
    <interactant intactId="EBI-1208116">
        <id>P24610</id>
    </interactant>
    <interactant intactId="EBI-971439">
        <id>Q08999</id>
        <label>RBL2</label>
    </interactant>
    <organismsDiffer>true</organismsDiffer>
    <experiments>3</experiments>
</comment>
<comment type="interaction">
    <interactant intactId="EBI-1208116">
        <id>P24610</id>
    </interactant>
    <interactant intactId="EBI-413034">
        <id>P0CG47</id>
        <label>UBB</label>
    </interactant>
    <organismsDiffer>true</organismsDiffer>
    <experiments>2</experiments>
</comment>
<comment type="subcellular location">
    <subcellularLocation>
        <location evidence="1">Nucleus</location>
    </subcellularLocation>
</comment>
<comment type="developmental stage">
    <text>Expressed during early neurogenesis.</text>
</comment>
<comment type="disease">
    <text evidence="5">The Splotch (Sp) mouse mutant displays defects in neural tube closure in the form of exencephaly and spina bifida. The splotch-delayed (Spd) phenotype is less severe than the other Sp alleles.</text>
</comment>
<comment type="similarity">
    <text evidence="9">Belongs to the paired homeobox family.</text>
</comment>
<keyword id="KW-0217">Developmental protein</keyword>
<keyword id="KW-0225">Disease variant</keyword>
<keyword id="KW-0238">DNA-binding</keyword>
<keyword id="KW-0371">Homeobox</keyword>
<keyword id="KW-0517">Myogenesis</keyword>
<keyword id="KW-0524">Neurogenesis</keyword>
<keyword id="KW-0539">Nucleus</keyword>
<keyword id="KW-0563">Paired box</keyword>
<keyword id="KW-0597">Phosphoprotein</keyword>
<keyword id="KW-1185">Reference proteome</keyword>
<keyword id="KW-0804">Transcription</keyword>
<keyword id="KW-0805">Transcription regulation</keyword>
<protein>
    <recommendedName>
        <fullName>Paired box protein Pax-3</fullName>
    </recommendedName>
</protein>
<dbReference type="EMBL" id="X59358">
    <property type="protein sequence ID" value="CAA42008.1"/>
    <property type="molecule type" value="mRNA"/>
</dbReference>
<dbReference type="EMBL" id="AK014337">
    <property type="protein sequence ID" value="BAB29280.1"/>
    <property type="molecule type" value="mRNA"/>
</dbReference>
<dbReference type="EMBL" id="AK045018">
    <property type="protein sequence ID" value="BAC32185.1"/>
    <property type="molecule type" value="mRNA"/>
</dbReference>
<dbReference type="EMBL" id="AK148354">
    <property type="protein sequence ID" value="BAE28501.1"/>
    <property type="molecule type" value="mRNA"/>
</dbReference>
<dbReference type="EMBL" id="S66429">
    <property type="protein sequence ID" value="AAB20359.1"/>
    <property type="molecule type" value="mRNA"/>
</dbReference>
<dbReference type="EMBL" id="S66433">
    <property type="protein sequence ID" value="AAB20360.1"/>
    <property type="molecule type" value="mRNA"/>
</dbReference>
<dbReference type="CCDS" id="CCDS15082.1"/>
<dbReference type="PIR" id="S15031">
    <property type="entry name" value="S15031"/>
</dbReference>
<dbReference type="RefSeq" id="NP_001152992.1">
    <property type="nucleotide sequence ID" value="NM_001159520.1"/>
</dbReference>
<dbReference type="RefSeq" id="NP_032807.3">
    <property type="nucleotide sequence ID" value="NM_008781.4"/>
</dbReference>
<dbReference type="SMR" id="P24610"/>
<dbReference type="BioGRID" id="202030">
    <property type="interactions" value="25"/>
</dbReference>
<dbReference type="CORUM" id="P24610"/>
<dbReference type="FunCoup" id="P24610">
    <property type="interactions" value="1007"/>
</dbReference>
<dbReference type="IntAct" id="P24610">
    <property type="interactions" value="9"/>
</dbReference>
<dbReference type="MINT" id="P24610"/>
<dbReference type="STRING" id="10090.ENSMUSP00000004994"/>
<dbReference type="iPTMnet" id="P24610"/>
<dbReference type="PhosphoSitePlus" id="P24610"/>
<dbReference type="PaxDb" id="10090-ENSMUSP00000004994"/>
<dbReference type="PeptideAtlas" id="P24610"/>
<dbReference type="Antibodypedia" id="4602">
    <property type="antibodies" value="567 antibodies from 44 providers"/>
</dbReference>
<dbReference type="DNASU" id="18505"/>
<dbReference type="Ensembl" id="ENSMUST00000087086.7">
    <property type="protein sequence ID" value="ENSMUSP00000084320.7"/>
    <property type="gene ID" value="ENSMUSG00000004872.16"/>
</dbReference>
<dbReference type="GeneID" id="18505"/>
<dbReference type="KEGG" id="mmu:18505"/>
<dbReference type="UCSC" id="uc007bqb.2">
    <property type="organism name" value="mouse"/>
</dbReference>
<dbReference type="AGR" id="MGI:97487"/>
<dbReference type="CTD" id="5077"/>
<dbReference type="MGI" id="MGI:97487">
    <property type="gene designation" value="Pax3"/>
</dbReference>
<dbReference type="VEuPathDB" id="HostDB:ENSMUSG00000004872"/>
<dbReference type="eggNOG" id="KOG0849">
    <property type="taxonomic scope" value="Eukaryota"/>
</dbReference>
<dbReference type="GeneTree" id="ENSGT00940000156504"/>
<dbReference type="HOGENOM" id="CLU_019281_8_0_1"/>
<dbReference type="InParanoid" id="P24610"/>
<dbReference type="OrthoDB" id="6159439at2759"/>
<dbReference type="PhylomeDB" id="P24610"/>
<dbReference type="Reactome" id="R-MMU-3214847">
    <property type="pathway name" value="HATs acetylate histones"/>
</dbReference>
<dbReference type="BioGRID-ORCS" id="18505">
    <property type="hits" value="2 hits in 79 CRISPR screens"/>
</dbReference>
<dbReference type="ChiTaRS" id="Pax3">
    <property type="organism name" value="mouse"/>
</dbReference>
<dbReference type="PRO" id="PR:P24610"/>
<dbReference type="Proteomes" id="UP000000589">
    <property type="component" value="Chromosome 1"/>
</dbReference>
<dbReference type="RNAct" id="P24610">
    <property type="molecule type" value="protein"/>
</dbReference>
<dbReference type="Bgee" id="ENSMUSG00000004872">
    <property type="expression patterns" value="Expressed in trunk somite and 144 other cell types or tissues"/>
</dbReference>
<dbReference type="ExpressionAtlas" id="P24610">
    <property type="expression patterns" value="baseline and differential"/>
</dbReference>
<dbReference type="GO" id="GO:0005634">
    <property type="term" value="C:nucleus"/>
    <property type="evidence" value="ECO:0000314"/>
    <property type="project" value="MGI"/>
</dbReference>
<dbReference type="GO" id="GO:0005667">
    <property type="term" value="C:transcription regulator complex"/>
    <property type="evidence" value="ECO:0000304"/>
    <property type="project" value="MGI"/>
</dbReference>
<dbReference type="GO" id="GO:0003682">
    <property type="term" value="F:chromatin binding"/>
    <property type="evidence" value="ECO:0000314"/>
    <property type="project" value="MGI"/>
</dbReference>
<dbReference type="GO" id="GO:0003700">
    <property type="term" value="F:DNA-binding transcription factor activity"/>
    <property type="evidence" value="ECO:0000304"/>
    <property type="project" value="MGI"/>
</dbReference>
<dbReference type="GO" id="GO:0000981">
    <property type="term" value="F:DNA-binding transcription factor activity, RNA polymerase II-specific"/>
    <property type="evidence" value="ECO:0000314"/>
    <property type="project" value="MGI"/>
</dbReference>
<dbReference type="GO" id="GO:0043565">
    <property type="term" value="F:sequence-specific DNA binding"/>
    <property type="evidence" value="ECO:0000314"/>
    <property type="project" value="MGI"/>
</dbReference>
<dbReference type="GO" id="GO:0001221">
    <property type="term" value="F:transcription coregulator binding"/>
    <property type="evidence" value="ECO:0000353"/>
    <property type="project" value="ARUK-UCL"/>
</dbReference>
<dbReference type="GO" id="GO:0055007">
    <property type="term" value="P:cardiac muscle cell differentiation"/>
    <property type="evidence" value="ECO:0000303"/>
    <property type="project" value="UniProtKB"/>
</dbReference>
<dbReference type="GO" id="GO:0016477">
    <property type="term" value="P:cell migration"/>
    <property type="evidence" value="ECO:0000315"/>
    <property type="project" value="MGI"/>
</dbReference>
<dbReference type="GO" id="GO:0008283">
    <property type="term" value="P:cell population proliferation"/>
    <property type="evidence" value="ECO:0000315"/>
    <property type="project" value="MGI"/>
</dbReference>
<dbReference type="GO" id="GO:0048066">
    <property type="term" value="P:developmental pigmentation"/>
    <property type="evidence" value="ECO:0000315"/>
    <property type="project" value="MGI"/>
</dbReference>
<dbReference type="GO" id="GO:0007507">
    <property type="term" value="P:heart development"/>
    <property type="evidence" value="ECO:0000315"/>
    <property type="project" value="MGI"/>
</dbReference>
<dbReference type="GO" id="GO:0060594">
    <property type="term" value="P:mammary gland specification"/>
    <property type="evidence" value="ECO:0000315"/>
    <property type="project" value="MGI"/>
</dbReference>
<dbReference type="GO" id="GO:0007517">
    <property type="term" value="P:muscle organ development"/>
    <property type="evidence" value="ECO:0000315"/>
    <property type="project" value="MGI"/>
</dbReference>
<dbReference type="GO" id="GO:0051451">
    <property type="term" value="P:myoblast migration"/>
    <property type="evidence" value="ECO:0000315"/>
    <property type="project" value="MGI"/>
</dbReference>
<dbReference type="GO" id="GO:0051450">
    <property type="term" value="P:myoblast proliferation"/>
    <property type="evidence" value="ECO:0000315"/>
    <property type="project" value="MGI"/>
</dbReference>
<dbReference type="GO" id="GO:0000122">
    <property type="term" value="P:negative regulation of transcription by RNA polymerase II"/>
    <property type="evidence" value="ECO:0000316"/>
    <property type="project" value="MGI"/>
</dbReference>
<dbReference type="GO" id="GO:0001755">
    <property type="term" value="P:neural crest cell migration"/>
    <property type="evidence" value="ECO:0000315"/>
    <property type="project" value="MGI"/>
</dbReference>
<dbReference type="GO" id="GO:0001843">
    <property type="term" value="P:neural tube closure"/>
    <property type="evidence" value="ECO:0000315"/>
    <property type="project" value="MGI"/>
</dbReference>
<dbReference type="GO" id="GO:0021915">
    <property type="term" value="P:neural tube development"/>
    <property type="evidence" value="ECO:0000316"/>
    <property type="project" value="MGI"/>
</dbReference>
<dbReference type="GO" id="GO:0048663">
    <property type="term" value="P:neuron fate commitment"/>
    <property type="evidence" value="ECO:0000316"/>
    <property type="project" value="MGI"/>
</dbReference>
<dbReference type="GO" id="GO:0045893">
    <property type="term" value="P:positive regulation of DNA-templated transcription"/>
    <property type="evidence" value="ECO:0000266"/>
    <property type="project" value="MGI"/>
</dbReference>
<dbReference type="GO" id="GO:2000648">
    <property type="term" value="P:positive regulation of stem cell proliferation"/>
    <property type="evidence" value="ECO:0000315"/>
    <property type="project" value="MGI"/>
</dbReference>
<dbReference type="GO" id="GO:0045944">
    <property type="term" value="P:positive regulation of transcription by RNA polymerase II"/>
    <property type="evidence" value="ECO:0000314"/>
    <property type="project" value="MGI"/>
</dbReference>
<dbReference type="GO" id="GO:0014807">
    <property type="term" value="P:regulation of somitogenesis"/>
    <property type="evidence" value="ECO:0000315"/>
    <property type="project" value="MGI"/>
</dbReference>
<dbReference type="GO" id="GO:0035914">
    <property type="term" value="P:skeletal muscle cell differentiation"/>
    <property type="evidence" value="ECO:0000303"/>
    <property type="project" value="UniProtKB"/>
</dbReference>
<dbReference type="GO" id="GO:0060538">
    <property type="term" value="P:skeletal muscle organ development"/>
    <property type="evidence" value="ECO:0000315"/>
    <property type="project" value="MGI"/>
</dbReference>
<dbReference type="GO" id="GO:0021527">
    <property type="term" value="P:spinal cord association neuron differentiation"/>
    <property type="evidence" value="ECO:0000316"/>
    <property type="project" value="MGI"/>
</dbReference>
<dbReference type="GO" id="GO:0072089">
    <property type="term" value="P:stem cell proliferation"/>
    <property type="evidence" value="ECO:0000315"/>
    <property type="project" value="MGI"/>
</dbReference>
<dbReference type="CDD" id="cd00086">
    <property type="entry name" value="homeodomain"/>
    <property type="match status" value="1"/>
</dbReference>
<dbReference type="CDD" id="cd00131">
    <property type="entry name" value="PAX"/>
    <property type="match status" value="1"/>
</dbReference>
<dbReference type="FunFam" id="1.10.10.10:FF:000080">
    <property type="entry name" value="paired box protein Pax-3 isoform X2"/>
    <property type="match status" value="1"/>
</dbReference>
<dbReference type="FunFam" id="1.10.10.60:FF:000035">
    <property type="entry name" value="paired box protein Pax-3 isoform X2"/>
    <property type="match status" value="1"/>
</dbReference>
<dbReference type="FunFam" id="1.10.10.10:FF:000031">
    <property type="entry name" value="Paired box protein Pax-7"/>
    <property type="match status" value="1"/>
</dbReference>
<dbReference type="Gene3D" id="1.10.10.60">
    <property type="entry name" value="Homeodomain-like"/>
    <property type="match status" value="1"/>
</dbReference>
<dbReference type="Gene3D" id="1.10.10.10">
    <property type="entry name" value="Winged helix-like DNA-binding domain superfamily/Winged helix DNA-binding domain"/>
    <property type="match status" value="2"/>
</dbReference>
<dbReference type="InterPro" id="IPR001356">
    <property type="entry name" value="HD"/>
</dbReference>
<dbReference type="InterPro" id="IPR017970">
    <property type="entry name" value="Homeobox_CS"/>
</dbReference>
<dbReference type="InterPro" id="IPR009057">
    <property type="entry name" value="Homeodomain-like_sf"/>
</dbReference>
<dbReference type="InterPro" id="IPR043182">
    <property type="entry name" value="PAIRED_DNA-bd_dom"/>
</dbReference>
<dbReference type="InterPro" id="IPR001523">
    <property type="entry name" value="Paired_dom"/>
</dbReference>
<dbReference type="InterPro" id="IPR022106">
    <property type="entry name" value="Pax7_C"/>
</dbReference>
<dbReference type="InterPro" id="IPR043565">
    <property type="entry name" value="PAX_fam"/>
</dbReference>
<dbReference type="InterPro" id="IPR036388">
    <property type="entry name" value="WH-like_DNA-bd_sf"/>
</dbReference>
<dbReference type="PANTHER" id="PTHR45636:SF17">
    <property type="entry name" value="PAIRED BOX PROTEIN PAX-3"/>
    <property type="match status" value="1"/>
</dbReference>
<dbReference type="PANTHER" id="PTHR45636">
    <property type="entry name" value="PAIRED BOX PROTEIN PAX-6-RELATED-RELATED"/>
    <property type="match status" value="1"/>
</dbReference>
<dbReference type="Pfam" id="PF00046">
    <property type="entry name" value="Homeodomain"/>
    <property type="match status" value="1"/>
</dbReference>
<dbReference type="Pfam" id="PF00292">
    <property type="entry name" value="PAX"/>
    <property type="match status" value="1"/>
</dbReference>
<dbReference type="Pfam" id="PF12360">
    <property type="entry name" value="Pax7"/>
    <property type="match status" value="1"/>
</dbReference>
<dbReference type="PRINTS" id="PR00027">
    <property type="entry name" value="PAIREDBOX"/>
</dbReference>
<dbReference type="SMART" id="SM00389">
    <property type="entry name" value="HOX"/>
    <property type="match status" value="1"/>
</dbReference>
<dbReference type="SMART" id="SM00351">
    <property type="entry name" value="PAX"/>
    <property type="match status" value="1"/>
</dbReference>
<dbReference type="SUPFAM" id="SSF46689">
    <property type="entry name" value="Homeodomain-like"/>
    <property type="match status" value="2"/>
</dbReference>
<dbReference type="PROSITE" id="PS00027">
    <property type="entry name" value="HOMEOBOX_1"/>
    <property type="match status" value="1"/>
</dbReference>
<dbReference type="PROSITE" id="PS50071">
    <property type="entry name" value="HOMEOBOX_2"/>
    <property type="match status" value="1"/>
</dbReference>
<dbReference type="PROSITE" id="PS00034">
    <property type="entry name" value="PAIRED_1"/>
    <property type="match status" value="1"/>
</dbReference>
<dbReference type="PROSITE" id="PS51057">
    <property type="entry name" value="PAIRED_2"/>
    <property type="match status" value="1"/>
</dbReference>
<name>PAX3_MOUSE</name>
<evidence type="ECO:0000250" key="1">
    <source>
        <dbReference type="UniProtKB" id="P23760"/>
    </source>
</evidence>
<evidence type="ECO:0000255" key="2">
    <source>
        <dbReference type="PROSITE-ProRule" id="PRU00108"/>
    </source>
</evidence>
<evidence type="ECO:0000255" key="3">
    <source>
        <dbReference type="PROSITE-ProRule" id="PRU00381"/>
    </source>
</evidence>
<evidence type="ECO:0000256" key="4">
    <source>
        <dbReference type="SAM" id="MobiDB-lite"/>
    </source>
</evidence>
<evidence type="ECO:0000269" key="5">
    <source>
    </source>
</evidence>
<evidence type="ECO:0000269" key="6">
    <source>
    </source>
</evidence>
<evidence type="ECO:0000269" key="7">
    <source>
    </source>
</evidence>
<evidence type="ECO:0000269" key="8">
    <source>
    </source>
</evidence>
<evidence type="ECO:0000305" key="9"/>